<accession>B8HMN5</accession>
<protein>
    <recommendedName>
        <fullName evidence="1">33 kDa chaperonin</fullName>
    </recommendedName>
    <alternativeName>
        <fullName evidence="1">Heat shock protein 33 homolog</fullName>
        <shortName evidence="1">HSP33</shortName>
    </alternativeName>
</protein>
<name>HSLO_CYAP4</name>
<gene>
    <name evidence="1" type="primary">hslO</name>
    <name type="ordered locus">Cyan7425_1272</name>
</gene>
<keyword id="KW-0143">Chaperone</keyword>
<keyword id="KW-0963">Cytoplasm</keyword>
<keyword id="KW-1015">Disulfide bond</keyword>
<keyword id="KW-0676">Redox-active center</keyword>
<keyword id="KW-0862">Zinc</keyword>
<feature type="chain" id="PRO_1000119257" description="33 kDa chaperonin">
    <location>
        <begin position="1"/>
        <end position="300"/>
    </location>
</feature>
<feature type="disulfide bond" description="Redox-active" evidence="1">
    <location>
        <begin position="240"/>
        <end position="242"/>
    </location>
</feature>
<feature type="disulfide bond" description="Redox-active" evidence="1">
    <location>
        <begin position="273"/>
        <end position="276"/>
    </location>
</feature>
<reference key="1">
    <citation type="journal article" date="2011" name="MBio">
        <title>Novel metabolic attributes of the genus Cyanothece, comprising a group of unicellular nitrogen-fixing Cyanobacteria.</title>
        <authorList>
            <person name="Bandyopadhyay A."/>
            <person name="Elvitigala T."/>
            <person name="Welsh E."/>
            <person name="Stockel J."/>
            <person name="Liberton M."/>
            <person name="Min H."/>
            <person name="Sherman L.A."/>
            <person name="Pakrasi H.B."/>
        </authorList>
    </citation>
    <scope>NUCLEOTIDE SEQUENCE [LARGE SCALE GENOMIC DNA]</scope>
    <source>
        <strain>PCC 7425 / ATCC 29141</strain>
    </source>
</reference>
<organism>
    <name type="scientific">Cyanothece sp. (strain PCC 7425 / ATCC 29141)</name>
    <dbReference type="NCBI Taxonomy" id="395961"/>
    <lineage>
        <taxon>Bacteria</taxon>
        <taxon>Bacillati</taxon>
        <taxon>Cyanobacteriota</taxon>
        <taxon>Cyanophyceae</taxon>
        <taxon>Gomontiellales</taxon>
        <taxon>Cyanothecaceae</taxon>
        <taxon>Cyanothece</taxon>
    </lineage>
</organism>
<comment type="function">
    <text evidence="1">Redox regulated molecular chaperone. Protects both thermally unfolding and oxidatively damaged proteins from irreversible aggregation. Plays an important role in the bacterial defense system toward oxidative stress.</text>
</comment>
<comment type="subcellular location">
    <subcellularLocation>
        <location evidence="1">Cytoplasm</location>
    </subcellularLocation>
</comment>
<comment type="PTM">
    <text evidence="1">Under oxidizing conditions two disulfide bonds are formed involving the reactive cysteines. Under reducing conditions zinc is bound to the reactive cysteines and the protein is inactive.</text>
</comment>
<comment type="similarity">
    <text evidence="1">Belongs to the HSP33 family.</text>
</comment>
<evidence type="ECO:0000255" key="1">
    <source>
        <dbReference type="HAMAP-Rule" id="MF_00117"/>
    </source>
</evidence>
<proteinExistence type="inferred from homology"/>
<sequence length="300" mass="32020">MADQLIRATAAEDGIRAVGVITTRLTEEARQRHKLSYVATAALGRTMAAGLLLASSMKQPQARVNIRIKGDGPLEGLFVDAGCDGTVRGYVYNPAIELPPNAKGKLDVGGAVGSQGYLYVIRDLGYGYPYSSTVELVSGEIAEDITHYLVTSEQTPSALVLGVFVTEAGVTAAGGVLIQVLPKAAQDEALVEKLESRISALSGFTPLLQRGLSLSEIFEQLLGDMGLTILPQRQLVRFHCRCSFDRMLGALKILGSDELQDMIDRDNGAEATCHFCGEVYQASSEQLAELIDELKAEAGG</sequence>
<dbReference type="EMBL" id="CP001344">
    <property type="protein sequence ID" value="ACL43650.1"/>
    <property type="molecule type" value="Genomic_DNA"/>
</dbReference>
<dbReference type="SMR" id="B8HMN5"/>
<dbReference type="STRING" id="395961.Cyan7425_1272"/>
<dbReference type="KEGG" id="cyn:Cyan7425_1272"/>
<dbReference type="eggNOG" id="COG1281">
    <property type="taxonomic scope" value="Bacteria"/>
</dbReference>
<dbReference type="HOGENOM" id="CLU_054493_1_0_3"/>
<dbReference type="OrthoDB" id="9776534at2"/>
<dbReference type="GO" id="GO:0005737">
    <property type="term" value="C:cytoplasm"/>
    <property type="evidence" value="ECO:0007669"/>
    <property type="project" value="UniProtKB-SubCell"/>
</dbReference>
<dbReference type="GO" id="GO:0044183">
    <property type="term" value="F:protein folding chaperone"/>
    <property type="evidence" value="ECO:0007669"/>
    <property type="project" value="TreeGrafter"/>
</dbReference>
<dbReference type="GO" id="GO:0051082">
    <property type="term" value="F:unfolded protein binding"/>
    <property type="evidence" value="ECO:0007669"/>
    <property type="project" value="UniProtKB-UniRule"/>
</dbReference>
<dbReference type="GO" id="GO:0042026">
    <property type="term" value="P:protein refolding"/>
    <property type="evidence" value="ECO:0007669"/>
    <property type="project" value="TreeGrafter"/>
</dbReference>
<dbReference type="CDD" id="cd00498">
    <property type="entry name" value="Hsp33"/>
    <property type="match status" value="1"/>
</dbReference>
<dbReference type="Gene3D" id="3.55.30.10">
    <property type="entry name" value="Hsp33 domain"/>
    <property type="match status" value="1"/>
</dbReference>
<dbReference type="Gene3D" id="3.90.1280.10">
    <property type="entry name" value="HSP33 redox switch-like"/>
    <property type="match status" value="1"/>
</dbReference>
<dbReference type="HAMAP" id="MF_00117">
    <property type="entry name" value="HslO"/>
    <property type="match status" value="1"/>
</dbReference>
<dbReference type="InterPro" id="IPR000397">
    <property type="entry name" value="Heat_shock_Hsp33"/>
</dbReference>
<dbReference type="InterPro" id="IPR016154">
    <property type="entry name" value="Heat_shock_Hsp33_C"/>
</dbReference>
<dbReference type="InterPro" id="IPR016153">
    <property type="entry name" value="Heat_shock_Hsp33_N"/>
</dbReference>
<dbReference type="NCBIfam" id="NF001033">
    <property type="entry name" value="PRK00114.1"/>
    <property type="match status" value="1"/>
</dbReference>
<dbReference type="PANTHER" id="PTHR30111">
    <property type="entry name" value="33 KDA CHAPERONIN"/>
    <property type="match status" value="1"/>
</dbReference>
<dbReference type="PANTHER" id="PTHR30111:SF1">
    <property type="entry name" value="33 KDA CHAPERONIN"/>
    <property type="match status" value="1"/>
</dbReference>
<dbReference type="Pfam" id="PF01430">
    <property type="entry name" value="HSP33"/>
    <property type="match status" value="1"/>
</dbReference>
<dbReference type="PIRSF" id="PIRSF005261">
    <property type="entry name" value="Heat_shock_Hsp33"/>
    <property type="match status" value="1"/>
</dbReference>
<dbReference type="SUPFAM" id="SSF64397">
    <property type="entry name" value="Hsp33 domain"/>
    <property type="match status" value="1"/>
</dbReference>
<dbReference type="SUPFAM" id="SSF118352">
    <property type="entry name" value="HSP33 redox switch-like"/>
    <property type="match status" value="1"/>
</dbReference>